<dbReference type="EC" id="2.7.4.22" evidence="1"/>
<dbReference type="EMBL" id="AE005176">
    <property type="protein sequence ID" value="AAK06108.1"/>
    <property type="molecule type" value="Genomic_DNA"/>
</dbReference>
<dbReference type="PIR" id="B86876">
    <property type="entry name" value="B86876"/>
</dbReference>
<dbReference type="RefSeq" id="NP_268167.1">
    <property type="nucleotide sequence ID" value="NC_002662.1"/>
</dbReference>
<dbReference type="RefSeq" id="WP_004254608.1">
    <property type="nucleotide sequence ID" value="NC_002662.1"/>
</dbReference>
<dbReference type="SMR" id="Q9CE38"/>
<dbReference type="PaxDb" id="272623-L70624"/>
<dbReference type="EnsemblBacteria" id="AAK06108">
    <property type="protein sequence ID" value="AAK06108"/>
    <property type="gene ID" value="L70624"/>
</dbReference>
<dbReference type="GeneID" id="61110335"/>
<dbReference type="KEGG" id="lla:L70624"/>
<dbReference type="PATRIC" id="fig|272623.7.peg.2165"/>
<dbReference type="eggNOG" id="COG0528">
    <property type="taxonomic scope" value="Bacteria"/>
</dbReference>
<dbReference type="HOGENOM" id="CLU_033861_0_0_9"/>
<dbReference type="OrthoDB" id="9807458at2"/>
<dbReference type="UniPathway" id="UPA00159">
    <property type="reaction ID" value="UER00275"/>
</dbReference>
<dbReference type="Proteomes" id="UP000002196">
    <property type="component" value="Chromosome"/>
</dbReference>
<dbReference type="GO" id="GO:0005737">
    <property type="term" value="C:cytoplasm"/>
    <property type="evidence" value="ECO:0007669"/>
    <property type="project" value="UniProtKB-SubCell"/>
</dbReference>
<dbReference type="GO" id="GO:0005524">
    <property type="term" value="F:ATP binding"/>
    <property type="evidence" value="ECO:0007669"/>
    <property type="project" value="UniProtKB-KW"/>
</dbReference>
<dbReference type="GO" id="GO:0033862">
    <property type="term" value="F:UMP kinase activity"/>
    <property type="evidence" value="ECO:0007669"/>
    <property type="project" value="UniProtKB-EC"/>
</dbReference>
<dbReference type="GO" id="GO:0044210">
    <property type="term" value="P:'de novo' CTP biosynthetic process"/>
    <property type="evidence" value="ECO:0007669"/>
    <property type="project" value="UniProtKB-UniRule"/>
</dbReference>
<dbReference type="GO" id="GO:0006225">
    <property type="term" value="P:UDP biosynthetic process"/>
    <property type="evidence" value="ECO:0007669"/>
    <property type="project" value="TreeGrafter"/>
</dbReference>
<dbReference type="CDD" id="cd04254">
    <property type="entry name" value="AAK_UMPK-PyrH-Ec"/>
    <property type="match status" value="1"/>
</dbReference>
<dbReference type="FunFam" id="3.40.1160.10:FF:000001">
    <property type="entry name" value="Uridylate kinase"/>
    <property type="match status" value="1"/>
</dbReference>
<dbReference type="Gene3D" id="3.40.1160.10">
    <property type="entry name" value="Acetylglutamate kinase-like"/>
    <property type="match status" value="1"/>
</dbReference>
<dbReference type="HAMAP" id="MF_01220_B">
    <property type="entry name" value="PyrH_B"/>
    <property type="match status" value="1"/>
</dbReference>
<dbReference type="InterPro" id="IPR036393">
    <property type="entry name" value="AceGlu_kinase-like_sf"/>
</dbReference>
<dbReference type="InterPro" id="IPR001048">
    <property type="entry name" value="Asp/Glu/Uridylate_kinase"/>
</dbReference>
<dbReference type="InterPro" id="IPR011817">
    <property type="entry name" value="Uridylate_kinase"/>
</dbReference>
<dbReference type="InterPro" id="IPR015963">
    <property type="entry name" value="Uridylate_kinase_bac"/>
</dbReference>
<dbReference type="NCBIfam" id="TIGR02075">
    <property type="entry name" value="pyrH_bact"/>
    <property type="match status" value="1"/>
</dbReference>
<dbReference type="PANTHER" id="PTHR42833">
    <property type="entry name" value="URIDYLATE KINASE"/>
    <property type="match status" value="1"/>
</dbReference>
<dbReference type="PANTHER" id="PTHR42833:SF4">
    <property type="entry name" value="URIDYLATE KINASE PUMPKIN, CHLOROPLASTIC"/>
    <property type="match status" value="1"/>
</dbReference>
<dbReference type="Pfam" id="PF00696">
    <property type="entry name" value="AA_kinase"/>
    <property type="match status" value="1"/>
</dbReference>
<dbReference type="PIRSF" id="PIRSF005650">
    <property type="entry name" value="Uridylate_kin"/>
    <property type="match status" value="1"/>
</dbReference>
<dbReference type="SUPFAM" id="SSF53633">
    <property type="entry name" value="Carbamate kinase-like"/>
    <property type="match status" value="1"/>
</dbReference>
<reference key="1">
    <citation type="journal article" date="2001" name="Genome Res.">
        <title>The complete genome sequence of the lactic acid bacterium Lactococcus lactis ssp. lactis IL1403.</title>
        <authorList>
            <person name="Bolotin A."/>
            <person name="Wincker P."/>
            <person name="Mauger S."/>
            <person name="Jaillon O."/>
            <person name="Malarme K."/>
            <person name="Weissenbach J."/>
            <person name="Ehrlich S.D."/>
            <person name="Sorokin A."/>
        </authorList>
    </citation>
    <scope>NUCLEOTIDE SEQUENCE [LARGE SCALE GENOMIC DNA]</scope>
    <source>
        <strain>IL1403</strain>
    </source>
</reference>
<organism>
    <name type="scientific">Lactococcus lactis subsp. lactis (strain IL1403)</name>
    <name type="common">Streptococcus lactis</name>
    <dbReference type="NCBI Taxonomy" id="272623"/>
    <lineage>
        <taxon>Bacteria</taxon>
        <taxon>Bacillati</taxon>
        <taxon>Bacillota</taxon>
        <taxon>Bacilli</taxon>
        <taxon>Lactobacillales</taxon>
        <taxon>Streptococcaceae</taxon>
        <taxon>Lactococcus</taxon>
    </lineage>
</organism>
<comment type="function">
    <text evidence="1">Catalyzes the reversible phosphorylation of UMP to UDP.</text>
</comment>
<comment type="catalytic activity">
    <reaction evidence="1">
        <text>UMP + ATP = UDP + ADP</text>
        <dbReference type="Rhea" id="RHEA:24400"/>
        <dbReference type="ChEBI" id="CHEBI:30616"/>
        <dbReference type="ChEBI" id="CHEBI:57865"/>
        <dbReference type="ChEBI" id="CHEBI:58223"/>
        <dbReference type="ChEBI" id="CHEBI:456216"/>
        <dbReference type="EC" id="2.7.4.22"/>
    </reaction>
</comment>
<comment type="activity regulation">
    <text evidence="1">Allosterically activated by GTP. Inhibited by UTP.</text>
</comment>
<comment type="pathway">
    <text evidence="1">Pyrimidine metabolism; CTP biosynthesis via de novo pathway; UDP from UMP (UMPK route): step 1/1.</text>
</comment>
<comment type="subunit">
    <text evidence="1">Homohexamer.</text>
</comment>
<comment type="subcellular location">
    <subcellularLocation>
        <location evidence="1">Cytoplasm</location>
    </subcellularLocation>
</comment>
<comment type="similarity">
    <text evidence="1">Belongs to the UMP kinase family.</text>
</comment>
<proteinExistence type="inferred from homology"/>
<accession>Q9CE38</accession>
<sequence>MAEIKYKRVLLKLSGEALSGEKGFGFDPETAKAVAEELKEVHDLGAELAIVCGGGNVWRGVTGEKAGMERAQADYMGMLATIQNGLFIQSALENIGVDTRVMTAIEMKAVAEPYIRRRAERHLEKGRVVIFAGGTGSPYFSTDTTSALRAAEINADVILMAKNGVDGVYNADPKLVADAIKFEHLTHMDVITKGLQVMDSTASTMSMDNHIPLVVFNMNEAGNITRVVRGEEIGTTVE</sequence>
<keyword id="KW-0021">Allosteric enzyme</keyword>
<keyword id="KW-0067">ATP-binding</keyword>
<keyword id="KW-0963">Cytoplasm</keyword>
<keyword id="KW-0418">Kinase</keyword>
<keyword id="KW-0547">Nucleotide-binding</keyword>
<keyword id="KW-0665">Pyrimidine biosynthesis</keyword>
<keyword id="KW-1185">Reference proteome</keyword>
<keyword id="KW-0808">Transferase</keyword>
<evidence type="ECO:0000255" key="1">
    <source>
        <dbReference type="HAMAP-Rule" id="MF_01220"/>
    </source>
</evidence>
<feature type="chain" id="PRO_0000143850" description="Uridylate kinase">
    <location>
        <begin position="1"/>
        <end position="238"/>
    </location>
</feature>
<feature type="region of interest" description="Involved in allosteric activation by GTP" evidence="1">
    <location>
        <begin position="20"/>
        <end position="25"/>
    </location>
</feature>
<feature type="binding site" evidence="1">
    <location>
        <begin position="12"/>
        <end position="15"/>
    </location>
    <ligand>
        <name>ATP</name>
        <dbReference type="ChEBI" id="CHEBI:30616"/>
    </ligand>
</feature>
<feature type="binding site" evidence="1">
    <location>
        <position position="54"/>
    </location>
    <ligand>
        <name>UMP</name>
        <dbReference type="ChEBI" id="CHEBI:57865"/>
    </ligand>
</feature>
<feature type="binding site" evidence="1">
    <location>
        <position position="55"/>
    </location>
    <ligand>
        <name>ATP</name>
        <dbReference type="ChEBI" id="CHEBI:30616"/>
    </ligand>
</feature>
<feature type="binding site" evidence="1">
    <location>
        <position position="59"/>
    </location>
    <ligand>
        <name>ATP</name>
        <dbReference type="ChEBI" id="CHEBI:30616"/>
    </ligand>
</feature>
<feature type="binding site" evidence="1">
    <location>
        <position position="74"/>
    </location>
    <ligand>
        <name>UMP</name>
        <dbReference type="ChEBI" id="CHEBI:57865"/>
    </ligand>
</feature>
<feature type="binding site" evidence="1">
    <location>
        <begin position="135"/>
        <end position="142"/>
    </location>
    <ligand>
        <name>UMP</name>
        <dbReference type="ChEBI" id="CHEBI:57865"/>
    </ligand>
</feature>
<feature type="binding site" evidence="1">
    <location>
        <position position="163"/>
    </location>
    <ligand>
        <name>ATP</name>
        <dbReference type="ChEBI" id="CHEBI:30616"/>
    </ligand>
</feature>
<feature type="binding site" evidence="1">
    <location>
        <position position="169"/>
    </location>
    <ligand>
        <name>ATP</name>
        <dbReference type="ChEBI" id="CHEBI:30616"/>
    </ligand>
</feature>
<feature type="binding site" evidence="1">
    <location>
        <position position="172"/>
    </location>
    <ligand>
        <name>ATP</name>
        <dbReference type="ChEBI" id="CHEBI:30616"/>
    </ligand>
</feature>
<protein>
    <recommendedName>
        <fullName evidence="1">Uridylate kinase</fullName>
        <shortName evidence="1">UK</shortName>
        <ecNumber evidence="1">2.7.4.22</ecNumber>
    </recommendedName>
    <alternativeName>
        <fullName evidence="1">Uridine monophosphate kinase</fullName>
        <shortName evidence="1">UMP kinase</shortName>
        <shortName evidence="1">UMPK</shortName>
    </alternativeName>
</protein>
<gene>
    <name evidence="1" type="primary">pyrH</name>
    <name type="ordered locus">LL2010</name>
    <name type="ORF">L70624</name>
</gene>
<name>PYRH_LACLA</name>